<accession>Q5P714</accession>
<keyword id="KW-1185">Reference proteome</keyword>
<feature type="chain" id="PRO_1000083606" description="Protein ApaG">
    <location>
        <begin position="1"/>
        <end position="127"/>
    </location>
</feature>
<feature type="domain" description="ApaG" evidence="1">
    <location>
        <begin position="3"/>
        <end position="127"/>
    </location>
</feature>
<protein>
    <recommendedName>
        <fullName evidence="1">Protein ApaG</fullName>
    </recommendedName>
</protein>
<sequence length="127" mass="13972">MSESEKYRIEVEAIAEFVPGQSDPDENRYVFAYHITLTNTGEVPAQLISRHWVITDGAGKVQEVRGLGVIGEQPMLAPGQQFSYSSGSVLETPVGTMQGSYQMAAEDGHRFDAEIPAFMLAMPRVLH</sequence>
<name>APAG_AROAE</name>
<evidence type="ECO:0000255" key="1">
    <source>
        <dbReference type="HAMAP-Rule" id="MF_00791"/>
    </source>
</evidence>
<organism>
    <name type="scientific">Aromatoleum aromaticum (strain DSM 19018 / LMG 30748 / EbN1)</name>
    <name type="common">Azoarcus sp. (strain EbN1)</name>
    <dbReference type="NCBI Taxonomy" id="76114"/>
    <lineage>
        <taxon>Bacteria</taxon>
        <taxon>Pseudomonadati</taxon>
        <taxon>Pseudomonadota</taxon>
        <taxon>Betaproteobacteria</taxon>
        <taxon>Rhodocyclales</taxon>
        <taxon>Rhodocyclaceae</taxon>
        <taxon>Aromatoleum</taxon>
    </lineage>
</organism>
<gene>
    <name evidence="1" type="primary">apaG</name>
    <name type="ordered locus">AZOSEA07740</name>
    <name type="ORF">ebA1421</name>
</gene>
<reference key="1">
    <citation type="journal article" date="2005" name="Arch. Microbiol.">
        <title>The genome sequence of an anaerobic aromatic-degrading denitrifying bacterium, strain EbN1.</title>
        <authorList>
            <person name="Rabus R."/>
            <person name="Kube M."/>
            <person name="Heider J."/>
            <person name="Beck A."/>
            <person name="Heitmann K."/>
            <person name="Widdel F."/>
            <person name="Reinhardt R."/>
        </authorList>
    </citation>
    <scope>NUCLEOTIDE SEQUENCE [LARGE SCALE GENOMIC DNA]</scope>
    <source>
        <strain>DSM 19018 / LMG 30748 / EbN1</strain>
    </source>
</reference>
<dbReference type="EMBL" id="CR555306">
    <property type="protein sequence ID" value="CAI06897.1"/>
    <property type="molecule type" value="Genomic_DNA"/>
</dbReference>
<dbReference type="RefSeq" id="WP_011236625.1">
    <property type="nucleotide sequence ID" value="NC_006513.1"/>
</dbReference>
<dbReference type="SMR" id="Q5P714"/>
<dbReference type="STRING" id="76114.ebA1421"/>
<dbReference type="KEGG" id="eba:ebA1421"/>
<dbReference type="eggNOG" id="COG2967">
    <property type="taxonomic scope" value="Bacteria"/>
</dbReference>
<dbReference type="HOGENOM" id="CLU_128074_0_0_4"/>
<dbReference type="OrthoDB" id="9795226at2"/>
<dbReference type="Proteomes" id="UP000006552">
    <property type="component" value="Chromosome"/>
</dbReference>
<dbReference type="GO" id="GO:0070987">
    <property type="term" value="P:error-free translesion synthesis"/>
    <property type="evidence" value="ECO:0007669"/>
    <property type="project" value="TreeGrafter"/>
</dbReference>
<dbReference type="Gene3D" id="2.60.40.1470">
    <property type="entry name" value="ApaG domain"/>
    <property type="match status" value="1"/>
</dbReference>
<dbReference type="HAMAP" id="MF_00791">
    <property type="entry name" value="ApaG"/>
    <property type="match status" value="1"/>
</dbReference>
<dbReference type="InterPro" id="IPR007474">
    <property type="entry name" value="ApaG_domain"/>
</dbReference>
<dbReference type="InterPro" id="IPR036767">
    <property type="entry name" value="ApaG_sf"/>
</dbReference>
<dbReference type="InterPro" id="IPR023065">
    <property type="entry name" value="Uncharacterised_ApaG"/>
</dbReference>
<dbReference type="NCBIfam" id="NF003967">
    <property type="entry name" value="PRK05461.1"/>
    <property type="match status" value="1"/>
</dbReference>
<dbReference type="PANTHER" id="PTHR14289">
    <property type="entry name" value="F-BOX ONLY PROTEIN 3"/>
    <property type="match status" value="1"/>
</dbReference>
<dbReference type="PANTHER" id="PTHR14289:SF16">
    <property type="entry name" value="POLYMERASE DELTA-INTERACTING PROTEIN 2"/>
    <property type="match status" value="1"/>
</dbReference>
<dbReference type="Pfam" id="PF04379">
    <property type="entry name" value="DUF525"/>
    <property type="match status" value="1"/>
</dbReference>
<dbReference type="SUPFAM" id="SSF110069">
    <property type="entry name" value="ApaG-like"/>
    <property type="match status" value="1"/>
</dbReference>
<dbReference type="PROSITE" id="PS51087">
    <property type="entry name" value="APAG"/>
    <property type="match status" value="1"/>
</dbReference>
<proteinExistence type="inferred from homology"/>